<reference key="1">
    <citation type="journal article" date="1996" name="Science">
        <title>Complete genome sequence of the methanogenic archaeon, Methanococcus jannaschii.</title>
        <authorList>
            <person name="Bult C.J."/>
            <person name="White O."/>
            <person name="Olsen G.J."/>
            <person name="Zhou L."/>
            <person name="Fleischmann R.D."/>
            <person name="Sutton G.G."/>
            <person name="Blake J.A."/>
            <person name="FitzGerald L.M."/>
            <person name="Clayton R.A."/>
            <person name="Gocayne J.D."/>
            <person name="Kerlavage A.R."/>
            <person name="Dougherty B.A."/>
            <person name="Tomb J.-F."/>
            <person name="Adams M.D."/>
            <person name="Reich C.I."/>
            <person name="Overbeek R."/>
            <person name="Kirkness E.F."/>
            <person name="Weinstock K.G."/>
            <person name="Merrick J.M."/>
            <person name="Glodek A."/>
            <person name="Scott J.L."/>
            <person name="Geoghagen N.S.M."/>
            <person name="Weidman J.F."/>
            <person name="Fuhrmann J.L."/>
            <person name="Nguyen D."/>
            <person name="Utterback T.R."/>
            <person name="Kelley J.M."/>
            <person name="Peterson J.D."/>
            <person name="Sadow P.W."/>
            <person name="Hanna M.C."/>
            <person name="Cotton M.D."/>
            <person name="Roberts K.M."/>
            <person name="Hurst M.A."/>
            <person name="Kaine B.P."/>
            <person name="Borodovsky M."/>
            <person name="Klenk H.-P."/>
            <person name="Fraser C.M."/>
            <person name="Smith H.O."/>
            <person name="Woese C.R."/>
            <person name="Venter J.C."/>
        </authorList>
    </citation>
    <scope>NUCLEOTIDE SEQUENCE [LARGE SCALE GENOMIC DNA]</scope>
    <source>
        <strain>ATCC 43067 / DSM 2661 / JAL-1 / JCM 10045 / NBRC 100440</strain>
    </source>
</reference>
<proteinExistence type="predicted"/>
<name>Y292_METJA</name>
<protein>
    <recommendedName>
        <fullName>Uncharacterized protein MJ0292</fullName>
    </recommendedName>
</protein>
<gene>
    <name type="ordered locus">MJ0292</name>
</gene>
<organism>
    <name type="scientific">Methanocaldococcus jannaschii (strain ATCC 43067 / DSM 2661 / JAL-1 / JCM 10045 / NBRC 100440)</name>
    <name type="common">Methanococcus jannaschii</name>
    <dbReference type="NCBI Taxonomy" id="243232"/>
    <lineage>
        <taxon>Archaea</taxon>
        <taxon>Methanobacteriati</taxon>
        <taxon>Methanobacteriota</taxon>
        <taxon>Methanomada group</taxon>
        <taxon>Methanococci</taxon>
        <taxon>Methanococcales</taxon>
        <taxon>Methanocaldococcaceae</taxon>
        <taxon>Methanocaldococcus</taxon>
    </lineage>
</organism>
<accession>Q57740</accession>
<dbReference type="EMBL" id="L77117">
    <property type="protein sequence ID" value="AAB98277.1"/>
    <property type="molecule type" value="Genomic_DNA"/>
</dbReference>
<dbReference type="PIR" id="E64336">
    <property type="entry name" value="E64336"/>
</dbReference>
<dbReference type="SMR" id="Q57740"/>
<dbReference type="FunCoup" id="Q57740">
    <property type="interactions" value="2"/>
</dbReference>
<dbReference type="STRING" id="243232.MJ_0292"/>
<dbReference type="PaxDb" id="243232-MJ_0292"/>
<dbReference type="EnsemblBacteria" id="AAB98277">
    <property type="protein sequence ID" value="AAB98277"/>
    <property type="gene ID" value="MJ_0292"/>
</dbReference>
<dbReference type="KEGG" id="mja:MJ_0292"/>
<dbReference type="eggNOG" id="arCOG04877">
    <property type="taxonomic scope" value="Archaea"/>
</dbReference>
<dbReference type="HOGENOM" id="CLU_171540_0_0_2"/>
<dbReference type="InParanoid" id="Q57740"/>
<dbReference type="Proteomes" id="UP000000805">
    <property type="component" value="Chromosome"/>
</dbReference>
<dbReference type="GO" id="GO:0005886">
    <property type="term" value="C:plasma membrane"/>
    <property type="evidence" value="ECO:0007669"/>
    <property type="project" value="UniProtKB-SubCell"/>
</dbReference>
<dbReference type="NCBIfam" id="NF004928">
    <property type="entry name" value="PRK06286.1-3"/>
    <property type="match status" value="1"/>
</dbReference>
<comment type="subcellular location">
    <subcellularLocation>
        <location evidence="2">Cell membrane</location>
        <topology evidence="2">Multi-pass membrane protein</topology>
    </subcellularLocation>
</comment>
<evidence type="ECO:0000255" key="1"/>
<evidence type="ECO:0000305" key="2"/>
<keyword id="KW-1003">Cell membrane</keyword>
<keyword id="KW-0472">Membrane</keyword>
<keyword id="KW-1185">Reference proteome</keyword>
<keyword id="KW-0812">Transmembrane</keyword>
<keyword id="KW-1133">Transmembrane helix</keyword>
<sequence>MVMLMEQFIGIVKDILVLIASFGILLASYRLWIEKDRKNIIYARIHILGVIDCACFLIFIALGETLLAFVYLILAPFLAHAIAHAAYNDNLSE</sequence>
<feature type="chain" id="PRO_0000106778" description="Uncharacterized protein MJ0292">
    <location>
        <begin position="1"/>
        <end position="93"/>
    </location>
</feature>
<feature type="transmembrane region" description="Helical" evidence="1">
    <location>
        <begin position="8"/>
        <end position="28"/>
    </location>
</feature>
<feature type="transmembrane region" description="Helical" evidence="1">
    <location>
        <begin position="54"/>
        <end position="74"/>
    </location>
</feature>